<name>SL1_ECHPL</name>
<reference key="1">
    <citation type="journal article" date="2003" name="Gene">
        <title>Novel sequences encoding venom C-type lectins are conserved in phylogenetically and geographically distinct Echis and Bitis viper species.</title>
        <authorList>
            <person name="Harrison R.A."/>
            <person name="Oliver J."/>
            <person name="Hasson S.S."/>
            <person name="Bharati K."/>
            <person name="Theakston R.D.G."/>
        </authorList>
    </citation>
    <scope>NUCLEOTIDE SEQUENCE [MRNA]</scope>
    <source>
        <tissue>Venom gland</tissue>
    </source>
</reference>
<evidence type="ECO:0000250" key="1"/>
<evidence type="ECO:0000255" key="2"/>
<evidence type="ECO:0000255" key="3">
    <source>
        <dbReference type="PROSITE-ProRule" id="PRU00040"/>
    </source>
</evidence>
<evidence type="ECO:0000305" key="4"/>
<keyword id="KW-1015">Disulfide bond</keyword>
<keyword id="KW-1199">Hemostasis impairing toxin</keyword>
<keyword id="KW-0964">Secreted</keyword>
<keyword id="KW-0732">Signal</keyword>
<keyword id="KW-0800">Toxin</keyword>
<accession>Q6X5S3</accession>
<organism>
    <name type="scientific">Echis pyramidum leakeyi</name>
    <name type="common">Leakey's carpet viper</name>
    <name type="synonym">Echis carinatus leakeyi</name>
    <dbReference type="NCBI Taxonomy" id="38415"/>
    <lineage>
        <taxon>Eukaryota</taxon>
        <taxon>Metazoa</taxon>
        <taxon>Chordata</taxon>
        <taxon>Craniata</taxon>
        <taxon>Vertebrata</taxon>
        <taxon>Euteleostomi</taxon>
        <taxon>Lepidosauria</taxon>
        <taxon>Squamata</taxon>
        <taxon>Bifurcata</taxon>
        <taxon>Unidentata</taxon>
        <taxon>Episquamata</taxon>
        <taxon>Toxicofera</taxon>
        <taxon>Serpentes</taxon>
        <taxon>Colubroidea</taxon>
        <taxon>Viperidae</taxon>
        <taxon>Viperinae</taxon>
        <taxon>Echis</taxon>
    </lineage>
</organism>
<comment type="function">
    <text evidence="1">Interferes with one step of hemostasis (modulation of platelet aggregation, or coagulation cascade, for example).</text>
</comment>
<comment type="subunit">
    <text evidence="1">Heterodimer; disulfide-linked.</text>
</comment>
<comment type="subcellular location">
    <subcellularLocation>
        <location evidence="1">Secreted</location>
    </subcellularLocation>
</comment>
<comment type="tissue specificity">
    <text>Expressed by the venom gland.</text>
</comment>
<comment type="miscellaneous">
    <text>Shows greater sequence similarity to the beta than alpha subunits compared to other heterodimer snaclecs.</text>
</comment>
<comment type="similarity">
    <text evidence="4">Belongs to the snaclec family.</text>
</comment>
<protein>
    <recommendedName>
        <fullName>Snaclec 1</fullName>
    </recommendedName>
    <alternativeName>
        <fullName>C-type lectin 1</fullName>
        <shortName>CTL-1</shortName>
    </alternativeName>
</protein>
<proteinExistence type="evidence at transcript level"/>
<dbReference type="EMBL" id="AY254337">
    <property type="protein sequence ID" value="AAQ01218.1"/>
    <property type="molecule type" value="mRNA"/>
</dbReference>
<dbReference type="SMR" id="Q6X5S3"/>
<dbReference type="GO" id="GO:0005576">
    <property type="term" value="C:extracellular region"/>
    <property type="evidence" value="ECO:0007669"/>
    <property type="project" value="UniProtKB-SubCell"/>
</dbReference>
<dbReference type="GO" id="GO:0090729">
    <property type="term" value="F:toxin activity"/>
    <property type="evidence" value="ECO:0007669"/>
    <property type="project" value="UniProtKB-KW"/>
</dbReference>
<dbReference type="FunFam" id="3.10.100.10:FF:000087">
    <property type="entry name" value="Snaclec rhodocetin subunit delta"/>
    <property type="match status" value="1"/>
</dbReference>
<dbReference type="Gene3D" id="3.10.100.10">
    <property type="entry name" value="Mannose-Binding Protein A, subunit A"/>
    <property type="match status" value="1"/>
</dbReference>
<dbReference type="InterPro" id="IPR001304">
    <property type="entry name" value="C-type_lectin-like"/>
</dbReference>
<dbReference type="InterPro" id="IPR016186">
    <property type="entry name" value="C-type_lectin-like/link_sf"/>
</dbReference>
<dbReference type="InterPro" id="IPR050111">
    <property type="entry name" value="C-type_lectin/snaclec_domain"/>
</dbReference>
<dbReference type="InterPro" id="IPR018378">
    <property type="entry name" value="C-type_lectin_CS"/>
</dbReference>
<dbReference type="InterPro" id="IPR016187">
    <property type="entry name" value="CTDL_fold"/>
</dbReference>
<dbReference type="PANTHER" id="PTHR22803">
    <property type="entry name" value="MANNOSE, PHOSPHOLIPASE, LECTIN RECEPTOR RELATED"/>
    <property type="match status" value="1"/>
</dbReference>
<dbReference type="Pfam" id="PF00059">
    <property type="entry name" value="Lectin_C"/>
    <property type="match status" value="1"/>
</dbReference>
<dbReference type="PRINTS" id="PR01504">
    <property type="entry name" value="PNCREATITSAP"/>
</dbReference>
<dbReference type="SMART" id="SM00034">
    <property type="entry name" value="CLECT"/>
    <property type="match status" value="1"/>
</dbReference>
<dbReference type="SUPFAM" id="SSF56436">
    <property type="entry name" value="C-type lectin-like"/>
    <property type="match status" value="1"/>
</dbReference>
<dbReference type="PROSITE" id="PS00615">
    <property type="entry name" value="C_TYPE_LECTIN_1"/>
    <property type="match status" value="1"/>
</dbReference>
<dbReference type="PROSITE" id="PS50041">
    <property type="entry name" value="C_TYPE_LECTIN_2"/>
    <property type="match status" value="1"/>
</dbReference>
<feature type="signal peptide" evidence="2">
    <location>
        <begin position="1"/>
        <end position="23"/>
    </location>
</feature>
<feature type="chain" id="PRO_0000355274" description="Snaclec 1">
    <location>
        <begin position="24"/>
        <end position="148"/>
    </location>
</feature>
<feature type="domain" description="C-type lectin" evidence="3">
    <location>
        <begin position="34"/>
        <end position="145"/>
    </location>
</feature>
<feature type="disulfide bond" evidence="3">
    <location>
        <begin position="27"/>
        <end position="38"/>
    </location>
</feature>
<feature type="disulfide bond" evidence="3">
    <location>
        <begin position="55"/>
        <end position="144"/>
    </location>
</feature>
<feature type="disulfide bond" description="Interchain" evidence="3">
    <location>
        <position position="100"/>
    </location>
</feature>
<feature type="disulfide bond" evidence="3">
    <location>
        <begin position="121"/>
        <end position="136"/>
    </location>
</feature>
<sequence>MGRFIFVSFGLLVVFLSLSGTEAGVCCPLGWSGYDQNCYKAFEELMNWADAEKFCTQQHKGSHLVSLHNIAEADFVVKKIVSVLKDGVIWMGLNDVWNECNWGWTDGAQLDYKAWNVESNCFIFKTAENHWSRTDCSGTHSFVCKSPA</sequence>